<protein>
    <recommendedName>
        <fullName evidence="1">Ribonuclease HII</fullName>
        <shortName evidence="1">RNase HII</shortName>
        <ecNumber evidence="1">3.1.26.4</ecNumber>
    </recommendedName>
</protein>
<keyword id="KW-0963">Cytoplasm</keyword>
<keyword id="KW-0255">Endonuclease</keyword>
<keyword id="KW-0378">Hydrolase</keyword>
<keyword id="KW-0464">Manganese</keyword>
<keyword id="KW-0479">Metal-binding</keyword>
<keyword id="KW-0540">Nuclease</keyword>
<keyword id="KW-1185">Reference proteome</keyword>
<sequence>MARTKAAASSQLGLELTQTVAVVQRLCGVDEAGRGPLAGPVYAAAVVLNPARQIRGLADSKILSAEKREALFDRICDHALGWHIASASVEEIDSINILHASMLAMQRAVQGLAASGVIPDLVQVDGNRCPQVAFPVEAIVKGDAKVRAISAASILAKVARDRELLKLHQEYPEYGFDSHFGYPTPQHFTALEQFGATPHHRRSFAPVRKVLERGMVRTMSSEAPPF</sequence>
<evidence type="ECO:0000255" key="1">
    <source>
        <dbReference type="HAMAP-Rule" id="MF_00052"/>
    </source>
</evidence>
<evidence type="ECO:0000255" key="2">
    <source>
        <dbReference type="PROSITE-ProRule" id="PRU01319"/>
    </source>
</evidence>
<proteinExistence type="inferred from homology"/>
<reference key="1">
    <citation type="journal article" date="2010" name="PLoS ONE">
        <title>The complete genome sequence of Cupriavidus metallidurans strain CH34, a master survivalist in harsh and anthropogenic environments.</title>
        <authorList>
            <person name="Janssen P.J."/>
            <person name="Van Houdt R."/>
            <person name="Moors H."/>
            <person name="Monsieurs P."/>
            <person name="Morin N."/>
            <person name="Michaux A."/>
            <person name="Benotmane M.A."/>
            <person name="Leys N."/>
            <person name="Vallaeys T."/>
            <person name="Lapidus A."/>
            <person name="Monchy S."/>
            <person name="Medigue C."/>
            <person name="Taghavi S."/>
            <person name="McCorkle S."/>
            <person name="Dunn J."/>
            <person name="van der Lelie D."/>
            <person name="Mergeay M."/>
        </authorList>
    </citation>
    <scope>NUCLEOTIDE SEQUENCE [LARGE SCALE GENOMIC DNA]</scope>
    <source>
        <strain>ATCC 43123 / DSM 2839 / NBRC 102507 / CH34</strain>
    </source>
</reference>
<organism>
    <name type="scientific">Cupriavidus metallidurans (strain ATCC 43123 / DSM 2839 / NBRC 102507 / CH34)</name>
    <name type="common">Ralstonia metallidurans</name>
    <dbReference type="NCBI Taxonomy" id="266264"/>
    <lineage>
        <taxon>Bacteria</taxon>
        <taxon>Pseudomonadati</taxon>
        <taxon>Pseudomonadota</taxon>
        <taxon>Betaproteobacteria</taxon>
        <taxon>Burkholderiales</taxon>
        <taxon>Burkholderiaceae</taxon>
        <taxon>Cupriavidus</taxon>
    </lineage>
</organism>
<comment type="function">
    <text evidence="1">Endonuclease that specifically degrades the RNA of RNA-DNA hybrids.</text>
</comment>
<comment type="catalytic activity">
    <reaction evidence="1">
        <text>Endonucleolytic cleavage to 5'-phosphomonoester.</text>
        <dbReference type="EC" id="3.1.26.4"/>
    </reaction>
</comment>
<comment type="cofactor">
    <cofactor evidence="1">
        <name>Mn(2+)</name>
        <dbReference type="ChEBI" id="CHEBI:29035"/>
    </cofactor>
    <cofactor evidence="1">
        <name>Mg(2+)</name>
        <dbReference type="ChEBI" id="CHEBI:18420"/>
    </cofactor>
    <text evidence="1">Manganese or magnesium. Binds 1 divalent metal ion per monomer in the absence of substrate. May bind a second metal ion after substrate binding.</text>
</comment>
<comment type="subcellular location">
    <subcellularLocation>
        <location evidence="1">Cytoplasm</location>
    </subcellularLocation>
</comment>
<comment type="similarity">
    <text evidence="1">Belongs to the RNase HII family.</text>
</comment>
<feature type="chain" id="PRO_0000334943" description="Ribonuclease HII">
    <location>
        <begin position="1"/>
        <end position="226"/>
    </location>
</feature>
<feature type="domain" description="RNase H type-2" evidence="2">
    <location>
        <begin position="24"/>
        <end position="216"/>
    </location>
</feature>
<feature type="binding site" evidence="1">
    <location>
        <position position="30"/>
    </location>
    <ligand>
        <name>a divalent metal cation</name>
        <dbReference type="ChEBI" id="CHEBI:60240"/>
    </ligand>
</feature>
<feature type="binding site" evidence="1">
    <location>
        <position position="31"/>
    </location>
    <ligand>
        <name>a divalent metal cation</name>
        <dbReference type="ChEBI" id="CHEBI:60240"/>
    </ligand>
</feature>
<feature type="binding site" evidence="1">
    <location>
        <position position="125"/>
    </location>
    <ligand>
        <name>a divalent metal cation</name>
        <dbReference type="ChEBI" id="CHEBI:60240"/>
    </ligand>
</feature>
<dbReference type="EC" id="3.1.26.4" evidence="1"/>
<dbReference type="EMBL" id="CP000352">
    <property type="protein sequence ID" value="ABF08332.1"/>
    <property type="molecule type" value="Genomic_DNA"/>
</dbReference>
<dbReference type="RefSeq" id="WP_011516198.1">
    <property type="nucleotide sequence ID" value="NC_007973.1"/>
</dbReference>
<dbReference type="SMR" id="Q1LNE4"/>
<dbReference type="STRING" id="266264.Rmet_1449"/>
<dbReference type="KEGG" id="rme:Rmet_1449"/>
<dbReference type="eggNOG" id="COG0164">
    <property type="taxonomic scope" value="Bacteria"/>
</dbReference>
<dbReference type="HOGENOM" id="CLU_036532_3_2_4"/>
<dbReference type="Proteomes" id="UP000002429">
    <property type="component" value="Chromosome"/>
</dbReference>
<dbReference type="GO" id="GO:0005737">
    <property type="term" value="C:cytoplasm"/>
    <property type="evidence" value="ECO:0007669"/>
    <property type="project" value="UniProtKB-SubCell"/>
</dbReference>
<dbReference type="GO" id="GO:0032299">
    <property type="term" value="C:ribonuclease H2 complex"/>
    <property type="evidence" value="ECO:0007669"/>
    <property type="project" value="TreeGrafter"/>
</dbReference>
<dbReference type="GO" id="GO:0030145">
    <property type="term" value="F:manganese ion binding"/>
    <property type="evidence" value="ECO:0007669"/>
    <property type="project" value="UniProtKB-UniRule"/>
</dbReference>
<dbReference type="GO" id="GO:0003723">
    <property type="term" value="F:RNA binding"/>
    <property type="evidence" value="ECO:0007669"/>
    <property type="project" value="InterPro"/>
</dbReference>
<dbReference type="GO" id="GO:0004523">
    <property type="term" value="F:RNA-DNA hybrid ribonuclease activity"/>
    <property type="evidence" value="ECO:0007669"/>
    <property type="project" value="UniProtKB-UniRule"/>
</dbReference>
<dbReference type="GO" id="GO:0043137">
    <property type="term" value="P:DNA replication, removal of RNA primer"/>
    <property type="evidence" value="ECO:0007669"/>
    <property type="project" value="TreeGrafter"/>
</dbReference>
<dbReference type="GO" id="GO:0006298">
    <property type="term" value="P:mismatch repair"/>
    <property type="evidence" value="ECO:0007669"/>
    <property type="project" value="TreeGrafter"/>
</dbReference>
<dbReference type="CDD" id="cd07182">
    <property type="entry name" value="RNase_HII_bacteria_HII_like"/>
    <property type="match status" value="1"/>
</dbReference>
<dbReference type="FunFam" id="3.30.420.10:FF:000006">
    <property type="entry name" value="Ribonuclease HII"/>
    <property type="match status" value="1"/>
</dbReference>
<dbReference type="Gene3D" id="3.30.420.10">
    <property type="entry name" value="Ribonuclease H-like superfamily/Ribonuclease H"/>
    <property type="match status" value="1"/>
</dbReference>
<dbReference type="HAMAP" id="MF_00052_B">
    <property type="entry name" value="RNase_HII_B"/>
    <property type="match status" value="1"/>
</dbReference>
<dbReference type="InterPro" id="IPR022898">
    <property type="entry name" value="RNase_HII"/>
</dbReference>
<dbReference type="InterPro" id="IPR001352">
    <property type="entry name" value="RNase_HII/HIII"/>
</dbReference>
<dbReference type="InterPro" id="IPR024567">
    <property type="entry name" value="RNase_HII/HIII_dom"/>
</dbReference>
<dbReference type="InterPro" id="IPR012337">
    <property type="entry name" value="RNaseH-like_sf"/>
</dbReference>
<dbReference type="InterPro" id="IPR036397">
    <property type="entry name" value="RNaseH_sf"/>
</dbReference>
<dbReference type="NCBIfam" id="NF000595">
    <property type="entry name" value="PRK00015.1-3"/>
    <property type="match status" value="1"/>
</dbReference>
<dbReference type="NCBIfam" id="NF000596">
    <property type="entry name" value="PRK00015.1-4"/>
    <property type="match status" value="1"/>
</dbReference>
<dbReference type="PANTHER" id="PTHR10954">
    <property type="entry name" value="RIBONUCLEASE H2 SUBUNIT A"/>
    <property type="match status" value="1"/>
</dbReference>
<dbReference type="PANTHER" id="PTHR10954:SF18">
    <property type="entry name" value="RIBONUCLEASE HII"/>
    <property type="match status" value="1"/>
</dbReference>
<dbReference type="Pfam" id="PF01351">
    <property type="entry name" value="RNase_HII"/>
    <property type="match status" value="1"/>
</dbReference>
<dbReference type="SUPFAM" id="SSF53098">
    <property type="entry name" value="Ribonuclease H-like"/>
    <property type="match status" value="1"/>
</dbReference>
<dbReference type="PROSITE" id="PS51975">
    <property type="entry name" value="RNASE_H_2"/>
    <property type="match status" value="1"/>
</dbReference>
<gene>
    <name evidence="1" type="primary">rnhB</name>
    <name type="ordered locus">Rmet_1449</name>
</gene>
<accession>Q1LNE4</accession>
<name>RNH2_CUPMC</name>